<name>EFTU1_SHEFN</name>
<sequence length="394" mass="43348">MAKAKFERNKPHVNVGTIGHVDHGKTTLTAAISAVLSKTYGGEVKNFAQIDNAPEERERGITINTSHIEYDTPIRHYAHVDCPGHADYVKNMITGAAQMDGAILVVAATDGPMPQTREHILLSRQVGVPFIIVFMNKCDMVDDEELLELVEMEVRELLSEYDFPGDDLPVIQGSALKALEGQPEWEAKILELAEALDTYIPEPARDIDKPFLLPIEDVFSISGRGTVVTGRVERGIVRVSDEVEIVGVRPTTKTTCTGVEMFRKLLDEGRAGENCGVLLRGTKRDDVERGQVLAKPGSINPHTTFESEVYVLSKEEGGRHTPFFKGYRPQFFFRTTDVTGTIELPEGVEMVMPGDNIKMVVTLIYPIAMDDGLRFAIREGGRTVGAGVVAKIIA</sequence>
<proteinExistence type="inferred from homology"/>
<dbReference type="EC" id="3.6.5.3" evidence="2"/>
<dbReference type="EMBL" id="CP000447">
    <property type="protein sequence ID" value="ABI69997.1"/>
    <property type="molecule type" value="Genomic_DNA"/>
</dbReference>
<dbReference type="SMR" id="Q089R8"/>
<dbReference type="STRING" id="318167.Sfri_0134"/>
<dbReference type="KEGG" id="sfr:Sfri_0134"/>
<dbReference type="eggNOG" id="COG0050">
    <property type="taxonomic scope" value="Bacteria"/>
</dbReference>
<dbReference type="HOGENOM" id="CLU_007265_0_2_6"/>
<dbReference type="OrthoDB" id="9803139at2"/>
<dbReference type="Proteomes" id="UP000000684">
    <property type="component" value="Chromosome"/>
</dbReference>
<dbReference type="GO" id="GO:0005829">
    <property type="term" value="C:cytosol"/>
    <property type="evidence" value="ECO:0007669"/>
    <property type="project" value="TreeGrafter"/>
</dbReference>
<dbReference type="GO" id="GO:0005525">
    <property type="term" value="F:GTP binding"/>
    <property type="evidence" value="ECO:0007669"/>
    <property type="project" value="UniProtKB-UniRule"/>
</dbReference>
<dbReference type="GO" id="GO:0003924">
    <property type="term" value="F:GTPase activity"/>
    <property type="evidence" value="ECO:0007669"/>
    <property type="project" value="InterPro"/>
</dbReference>
<dbReference type="GO" id="GO:0097216">
    <property type="term" value="F:guanosine tetraphosphate binding"/>
    <property type="evidence" value="ECO:0007669"/>
    <property type="project" value="UniProtKB-ARBA"/>
</dbReference>
<dbReference type="GO" id="GO:0003746">
    <property type="term" value="F:translation elongation factor activity"/>
    <property type="evidence" value="ECO:0007669"/>
    <property type="project" value="UniProtKB-UniRule"/>
</dbReference>
<dbReference type="CDD" id="cd01884">
    <property type="entry name" value="EF_Tu"/>
    <property type="match status" value="1"/>
</dbReference>
<dbReference type="CDD" id="cd03697">
    <property type="entry name" value="EFTU_II"/>
    <property type="match status" value="1"/>
</dbReference>
<dbReference type="CDD" id="cd03707">
    <property type="entry name" value="EFTU_III"/>
    <property type="match status" value="1"/>
</dbReference>
<dbReference type="FunFam" id="2.40.30.10:FF:000001">
    <property type="entry name" value="Elongation factor Tu"/>
    <property type="match status" value="1"/>
</dbReference>
<dbReference type="FunFam" id="3.40.50.300:FF:000003">
    <property type="entry name" value="Elongation factor Tu"/>
    <property type="match status" value="1"/>
</dbReference>
<dbReference type="Gene3D" id="3.40.50.300">
    <property type="entry name" value="P-loop containing nucleotide triphosphate hydrolases"/>
    <property type="match status" value="1"/>
</dbReference>
<dbReference type="Gene3D" id="2.40.30.10">
    <property type="entry name" value="Translation factors"/>
    <property type="match status" value="2"/>
</dbReference>
<dbReference type="HAMAP" id="MF_00118_B">
    <property type="entry name" value="EF_Tu_B"/>
    <property type="match status" value="1"/>
</dbReference>
<dbReference type="InterPro" id="IPR041709">
    <property type="entry name" value="EF-Tu_GTP-bd"/>
</dbReference>
<dbReference type="InterPro" id="IPR050055">
    <property type="entry name" value="EF-Tu_GTPase"/>
</dbReference>
<dbReference type="InterPro" id="IPR004161">
    <property type="entry name" value="EFTu-like_2"/>
</dbReference>
<dbReference type="InterPro" id="IPR033720">
    <property type="entry name" value="EFTU_2"/>
</dbReference>
<dbReference type="InterPro" id="IPR031157">
    <property type="entry name" value="G_TR_CS"/>
</dbReference>
<dbReference type="InterPro" id="IPR027417">
    <property type="entry name" value="P-loop_NTPase"/>
</dbReference>
<dbReference type="InterPro" id="IPR005225">
    <property type="entry name" value="Small_GTP-bd"/>
</dbReference>
<dbReference type="InterPro" id="IPR000795">
    <property type="entry name" value="T_Tr_GTP-bd_dom"/>
</dbReference>
<dbReference type="InterPro" id="IPR009000">
    <property type="entry name" value="Transl_B-barrel_sf"/>
</dbReference>
<dbReference type="InterPro" id="IPR009001">
    <property type="entry name" value="Transl_elong_EF1A/Init_IF2_C"/>
</dbReference>
<dbReference type="InterPro" id="IPR004541">
    <property type="entry name" value="Transl_elong_EFTu/EF1A_bac/org"/>
</dbReference>
<dbReference type="InterPro" id="IPR004160">
    <property type="entry name" value="Transl_elong_EFTu/EF1A_C"/>
</dbReference>
<dbReference type="NCBIfam" id="TIGR00485">
    <property type="entry name" value="EF-Tu"/>
    <property type="match status" value="1"/>
</dbReference>
<dbReference type="NCBIfam" id="NF000766">
    <property type="entry name" value="PRK00049.1"/>
    <property type="match status" value="1"/>
</dbReference>
<dbReference type="NCBIfam" id="NF009372">
    <property type="entry name" value="PRK12735.1"/>
    <property type="match status" value="1"/>
</dbReference>
<dbReference type="NCBIfam" id="NF009373">
    <property type="entry name" value="PRK12736.1"/>
    <property type="match status" value="1"/>
</dbReference>
<dbReference type="NCBIfam" id="TIGR00231">
    <property type="entry name" value="small_GTP"/>
    <property type="match status" value="1"/>
</dbReference>
<dbReference type="PANTHER" id="PTHR43721:SF22">
    <property type="entry name" value="ELONGATION FACTOR TU, MITOCHONDRIAL"/>
    <property type="match status" value="1"/>
</dbReference>
<dbReference type="PANTHER" id="PTHR43721">
    <property type="entry name" value="ELONGATION FACTOR TU-RELATED"/>
    <property type="match status" value="1"/>
</dbReference>
<dbReference type="Pfam" id="PF00009">
    <property type="entry name" value="GTP_EFTU"/>
    <property type="match status" value="1"/>
</dbReference>
<dbReference type="Pfam" id="PF03144">
    <property type="entry name" value="GTP_EFTU_D2"/>
    <property type="match status" value="1"/>
</dbReference>
<dbReference type="Pfam" id="PF03143">
    <property type="entry name" value="GTP_EFTU_D3"/>
    <property type="match status" value="1"/>
</dbReference>
<dbReference type="PRINTS" id="PR00315">
    <property type="entry name" value="ELONGATNFCT"/>
</dbReference>
<dbReference type="SUPFAM" id="SSF50465">
    <property type="entry name" value="EF-Tu/eEF-1alpha/eIF2-gamma C-terminal domain"/>
    <property type="match status" value="1"/>
</dbReference>
<dbReference type="SUPFAM" id="SSF52540">
    <property type="entry name" value="P-loop containing nucleoside triphosphate hydrolases"/>
    <property type="match status" value="1"/>
</dbReference>
<dbReference type="SUPFAM" id="SSF50447">
    <property type="entry name" value="Translation proteins"/>
    <property type="match status" value="1"/>
</dbReference>
<dbReference type="PROSITE" id="PS00301">
    <property type="entry name" value="G_TR_1"/>
    <property type="match status" value="1"/>
</dbReference>
<dbReference type="PROSITE" id="PS51722">
    <property type="entry name" value="G_TR_2"/>
    <property type="match status" value="1"/>
</dbReference>
<evidence type="ECO:0000250" key="1"/>
<evidence type="ECO:0000255" key="2">
    <source>
        <dbReference type="HAMAP-Rule" id="MF_00118"/>
    </source>
</evidence>
<feature type="chain" id="PRO_0000337524" description="Elongation factor Tu 1">
    <location>
        <begin position="1"/>
        <end position="394"/>
    </location>
</feature>
<feature type="domain" description="tr-type G">
    <location>
        <begin position="10"/>
        <end position="204"/>
    </location>
</feature>
<feature type="region of interest" description="G1" evidence="1">
    <location>
        <begin position="19"/>
        <end position="26"/>
    </location>
</feature>
<feature type="region of interest" description="G2" evidence="1">
    <location>
        <begin position="60"/>
        <end position="64"/>
    </location>
</feature>
<feature type="region of interest" description="G3" evidence="1">
    <location>
        <begin position="81"/>
        <end position="84"/>
    </location>
</feature>
<feature type="region of interest" description="G4" evidence="1">
    <location>
        <begin position="136"/>
        <end position="139"/>
    </location>
</feature>
<feature type="region of interest" description="G5" evidence="1">
    <location>
        <begin position="174"/>
        <end position="176"/>
    </location>
</feature>
<feature type="binding site" evidence="2">
    <location>
        <begin position="19"/>
        <end position="26"/>
    </location>
    <ligand>
        <name>GTP</name>
        <dbReference type="ChEBI" id="CHEBI:37565"/>
    </ligand>
</feature>
<feature type="binding site" evidence="2">
    <location>
        <position position="26"/>
    </location>
    <ligand>
        <name>Mg(2+)</name>
        <dbReference type="ChEBI" id="CHEBI:18420"/>
    </ligand>
</feature>
<feature type="binding site" evidence="2">
    <location>
        <begin position="81"/>
        <end position="85"/>
    </location>
    <ligand>
        <name>GTP</name>
        <dbReference type="ChEBI" id="CHEBI:37565"/>
    </ligand>
</feature>
<feature type="binding site" evidence="2">
    <location>
        <begin position="136"/>
        <end position="139"/>
    </location>
    <ligand>
        <name>GTP</name>
        <dbReference type="ChEBI" id="CHEBI:37565"/>
    </ligand>
</feature>
<keyword id="KW-0963">Cytoplasm</keyword>
<keyword id="KW-0251">Elongation factor</keyword>
<keyword id="KW-0342">GTP-binding</keyword>
<keyword id="KW-0378">Hydrolase</keyword>
<keyword id="KW-0460">Magnesium</keyword>
<keyword id="KW-0479">Metal-binding</keyword>
<keyword id="KW-0547">Nucleotide-binding</keyword>
<keyword id="KW-0648">Protein biosynthesis</keyword>
<keyword id="KW-1185">Reference proteome</keyword>
<organism>
    <name type="scientific">Shewanella frigidimarina (strain NCIMB 400)</name>
    <dbReference type="NCBI Taxonomy" id="318167"/>
    <lineage>
        <taxon>Bacteria</taxon>
        <taxon>Pseudomonadati</taxon>
        <taxon>Pseudomonadota</taxon>
        <taxon>Gammaproteobacteria</taxon>
        <taxon>Alteromonadales</taxon>
        <taxon>Shewanellaceae</taxon>
        <taxon>Shewanella</taxon>
    </lineage>
</organism>
<reference key="1">
    <citation type="submission" date="2006-08" db="EMBL/GenBank/DDBJ databases">
        <title>Complete sequence of Shewanella frigidimarina NCIMB 400.</title>
        <authorList>
            <consortium name="US DOE Joint Genome Institute"/>
            <person name="Copeland A."/>
            <person name="Lucas S."/>
            <person name="Lapidus A."/>
            <person name="Barry K."/>
            <person name="Detter J.C."/>
            <person name="Glavina del Rio T."/>
            <person name="Hammon N."/>
            <person name="Israni S."/>
            <person name="Dalin E."/>
            <person name="Tice H."/>
            <person name="Pitluck S."/>
            <person name="Fredrickson J.K."/>
            <person name="Kolker E."/>
            <person name="McCuel L.A."/>
            <person name="DiChristina T."/>
            <person name="Nealson K.H."/>
            <person name="Newman D."/>
            <person name="Tiedje J.M."/>
            <person name="Zhou J."/>
            <person name="Romine M.F."/>
            <person name="Culley D.E."/>
            <person name="Serres M."/>
            <person name="Chertkov O."/>
            <person name="Brettin T."/>
            <person name="Bruce D."/>
            <person name="Han C."/>
            <person name="Tapia R."/>
            <person name="Gilna P."/>
            <person name="Schmutz J."/>
            <person name="Larimer F."/>
            <person name="Land M."/>
            <person name="Hauser L."/>
            <person name="Kyrpides N."/>
            <person name="Mikhailova N."/>
            <person name="Richardson P."/>
        </authorList>
    </citation>
    <scope>NUCLEOTIDE SEQUENCE [LARGE SCALE GENOMIC DNA]</scope>
    <source>
        <strain>NCIMB 400</strain>
    </source>
</reference>
<gene>
    <name evidence="2" type="primary">tuf1</name>
    <name type="ordered locus">Sfri_0134</name>
</gene>
<protein>
    <recommendedName>
        <fullName evidence="2">Elongation factor Tu 1</fullName>
        <shortName evidence="2">EF-Tu 1</shortName>
        <ecNumber evidence="2">3.6.5.3</ecNumber>
    </recommendedName>
</protein>
<accession>Q089R8</accession>
<comment type="function">
    <text evidence="2">GTP hydrolase that promotes the GTP-dependent binding of aminoacyl-tRNA to the A-site of ribosomes during protein biosynthesis.</text>
</comment>
<comment type="catalytic activity">
    <reaction evidence="2">
        <text>GTP + H2O = GDP + phosphate + H(+)</text>
        <dbReference type="Rhea" id="RHEA:19669"/>
        <dbReference type="ChEBI" id="CHEBI:15377"/>
        <dbReference type="ChEBI" id="CHEBI:15378"/>
        <dbReference type="ChEBI" id="CHEBI:37565"/>
        <dbReference type="ChEBI" id="CHEBI:43474"/>
        <dbReference type="ChEBI" id="CHEBI:58189"/>
        <dbReference type="EC" id="3.6.5.3"/>
    </reaction>
    <physiologicalReaction direction="left-to-right" evidence="2">
        <dbReference type="Rhea" id="RHEA:19670"/>
    </physiologicalReaction>
</comment>
<comment type="subunit">
    <text evidence="2">Monomer.</text>
</comment>
<comment type="subcellular location">
    <subcellularLocation>
        <location evidence="2">Cytoplasm</location>
    </subcellularLocation>
</comment>
<comment type="similarity">
    <text evidence="2">Belongs to the TRAFAC class translation factor GTPase superfamily. Classic translation factor GTPase family. EF-Tu/EF-1A subfamily.</text>
</comment>